<protein>
    <recommendedName>
        <fullName evidence="1">Phosphoenolpyruvate synthase regulatory protein</fullName>
        <shortName evidence="1">PEP synthase regulatory protein</shortName>
        <shortName evidence="1">PSRP</shortName>
        <ecNumber evidence="1">2.7.11.33</ecNumber>
        <ecNumber evidence="1">2.7.4.28</ecNumber>
    </recommendedName>
    <alternativeName>
        <fullName evidence="1">Pyruvate, water dikinase regulatory protein</fullName>
    </alternativeName>
</protein>
<name>PSRP_ECO45</name>
<keyword id="KW-0418">Kinase</keyword>
<keyword id="KW-0547">Nucleotide-binding</keyword>
<keyword id="KW-1185">Reference proteome</keyword>
<keyword id="KW-0723">Serine/threonine-protein kinase</keyword>
<keyword id="KW-0808">Transferase</keyword>
<gene>
    <name evidence="1" type="primary">ppsR</name>
    <name type="ordered locus">ECS88_1754</name>
</gene>
<accession>B7MAR4</accession>
<proteinExistence type="inferred from homology"/>
<dbReference type="EC" id="2.7.11.33" evidence="1"/>
<dbReference type="EC" id="2.7.4.28" evidence="1"/>
<dbReference type="EMBL" id="CU928161">
    <property type="protein sequence ID" value="CAR03063.1"/>
    <property type="molecule type" value="Genomic_DNA"/>
</dbReference>
<dbReference type="RefSeq" id="WP_000368046.1">
    <property type="nucleotide sequence ID" value="NC_011742.1"/>
</dbReference>
<dbReference type="SMR" id="B7MAR4"/>
<dbReference type="GeneID" id="93775866"/>
<dbReference type="KEGG" id="ecz:ECS88_1754"/>
<dbReference type="HOGENOM" id="CLU_046206_1_0_6"/>
<dbReference type="Proteomes" id="UP000000747">
    <property type="component" value="Chromosome"/>
</dbReference>
<dbReference type="GO" id="GO:0043531">
    <property type="term" value="F:ADP binding"/>
    <property type="evidence" value="ECO:0007669"/>
    <property type="project" value="UniProtKB-UniRule"/>
</dbReference>
<dbReference type="GO" id="GO:0005524">
    <property type="term" value="F:ATP binding"/>
    <property type="evidence" value="ECO:0007669"/>
    <property type="project" value="InterPro"/>
</dbReference>
<dbReference type="GO" id="GO:0016776">
    <property type="term" value="F:phosphotransferase activity, phosphate group as acceptor"/>
    <property type="evidence" value="ECO:0007669"/>
    <property type="project" value="UniProtKB-UniRule"/>
</dbReference>
<dbReference type="GO" id="GO:0004674">
    <property type="term" value="F:protein serine/threonine kinase activity"/>
    <property type="evidence" value="ECO:0007669"/>
    <property type="project" value="UniProtKB-UniRule"/>
</dbReference>
<dbReference type="HAMAP" id="MF_01062">
    <property type="entry name" value="PSRP"/>
    <property type="match status" value="1"/>
</dbReference>
<dbReference type="InterPro" id="IPR005177">
    <property type="entry name" value="Kinase-pyrophosphorylase"/>
</dbReference>
<dbReference type="InterPro" id="IPR026530">
    <property type="entry name" value="PSRP"/>
</dbReference>
<dbReference type="NCBIfam" id="NF003742">
    <property type="entry name" value="PRK05339.1"/>
    <property type="match status" value="1"/>
</dbReference>
<dbReference type="PANTHER" id="PTHR31756">
    <property type="entry name" value="PYRUVATE, PHOSPHATE DIKINASE REGULATORY PROTEIN 1, CHLOROPLASTIC"/>
    <property type="match status" value="1"/>
</dbReference>
<dbReference type="PANTHER" id="PTHR31756:SF3">
    <property type="entry name" value="PYRUVATE, PHOSPHATE DIKINASE REGULATORY PROTEIN 1, CHLOROPLASTIC"/>
    <property type="match status" value="1"/>
</dbReference>
<dbReference type="Pfam" id="PF03618">
    <property type="entry name" value="Kinase-PPPase"/>
    <property type="match status" value="1"/>
</dbReference>
<organism>
    <name type="scientific">Escherichia coli O45:K1 (strain S88 / ExPEC)</name>
    <dbReference type="NCBI Taxonomy" id="585035"/>
    <lineage>
        <taxon>Bacteria</taxon>
        <taxon>Pseudomonadati</taxon>
        <taxon>Pseudomonadota</taxon>
        <taxon>Gammaproteobacteria</taxon>
        <taxon>Enterobacterales</taxon>
        <taxon>Enterobacteriaceae</taxon>
        <taxon>Escherichia</taxon>
    </lineage>
</organism>
<sequence>MDNAVDRHVFYISDGTAITAEVLGHAVMSQFPVTISSITLPFVENESRARAVKDQIDAIYHQTGVRPLVFYSIVLPEIRAIILQSEGFCQDIVQALVAPLQQEMKLDPTPIAHRTHGLNPNNLNKYDARIAAIDYTLAHDDGISLRNLDQAQVILLGVSRCGKTPTSLYLAMQFGIRAANYPFIADDMDNLVLPASLKPLQHKLFGLTIDPERLAAIREERRENSRYASLRQCRMEVAEVEALYRKNQIPWINSTNYSVEEIATKILDIMGLSRRMY</sequence>
<evidence type="ECO:0000255" key="1">
    <source>
        <dbReference type="HAMAP-Rule" id="MF_01062"/>
    </source>
</evidence>
<reference key="1">
    <citation type="journal article" date="2009" name="PLoS Genet.">
        <title>Organised genome dynamics in the Escherichia coli species results in highly diverse adaptive paths.</title>
        <authorList>
            <person name="Touchon M."/>
            <person name="Hoede C."/>
            <person name="Tenaillon O."/>
            <person name="Barbe V."/>
            <person name="Baeriswyl S."/>
            <person name="Bidet P."/>
            <person name="Bingen E."/>
            <person name="Bonacorsi S."/>
            <person name="Bouchier C."/>
            <person name="Bouvet O."/>
            <person name="Calteau A."/>
            <person name="Chiapello H."/>
            <person name="Clermont O."/>
            <person name="Cruveiller S."/>
            <person name="Danchin A."/>
            <person name="Diard M."/>
            <person name="Dossat C."/>
            <person name="Karoui M.E."/>
            <person name="Frapy E."/>
            <person name="Garry L."/>
            <person name="Ghigo J.M."/>
            <person name="Gilles A.M."/>
            <person name="Johnson J."/>
            <person name="Le Bouguenec C."/>
            <person name="Lescat M."/>
            <person name="Mangenot S."/>
            <person name="Martinez-Jehanne V."/>
            <person name="Matic I."/>
            <person name="Nassif X."/>
            <person name="Oztas S."/>
            <person name="Petit M.A."/>
            <person name="Pichon C."/>
            <person name="Rouy Z."/>
            <person name="Ruf C.S."/>
            <person name="Schneider D."/>
            <person name="Tourret J."/>
            <person name="Vacherie B."/>
            <person name="Vallenet D."/>
            <person name="Medigue C."/>
            <person name="Rocha E.P.C."/>
            <person name="Denamur E."/>
        </authorList>
    </citation>
    <scope>NUCLEOTIDE SEQUENCE [LARGE SCALE GENOMIC DNA]</scope>
    <source>
        <strain>S88 / ExPEC</strain>
    </source>
</reference>
<feature type="chain" id="PRO_1000136466" description="Phosphoenolpyruvate synthase regulatory protein">
    <location>
        <begin position="1"/>
        <end position="277"/>
    </location>
</feature>
<feature type="binding site" evidence="1">
    <location>
        <begin position="157"/>
        <end position="164"/>
    </location>
    <ligand>
        <name>ADP</name>
        <dbReference type="ChEBI" id="CHEBI:456216"/>
    </ligand>
</feature>
<comment type="function">
    <text evidence="1">Bifunctional serine/threonine kinase and phosphorylase involved in the regulation of the phosphoenolpyruvate synthase (PEPS) by catalyzing its phosphorylation/dephosphorylation.</text>
</comment>
<comment type="catalytic activity">
    <reaction evidence="1">
        <text>[pyruvate, water dikinase] + ADP = [pyruvate, water dikinase]-phosphate + AMP + H(+)</text>
        <dbReference type="Rhea" id="RHEA:46020"/>
        <dbReference type="Rhea" id="RHEA-COMP:11425"/>
        <dbReference type="Rhea" id="RHEA-COMP:11426"/>
        <dbReference type="ChEBI" id="CHEBI:15378"/>
        <dbReference type="ChEBI" id="CHEBI:43176"/>
        <dbReference type="ChEBI" id="CHEBI:68546"/>
        <dbReference type="ChEBI" id="CHEBI:456215"/>
        <dbReference type="ChEBI" id="CHEBI:456216"/>
        <dbReference type="EC" id="2.7.11.33"/>
    </reaction>
</comment>
<comment type="catalytic activity">
    <reaction evidence="1">
        <text>[pyruvate, water dikinase]-phosphate + phosphate + H(+) = [pyruvate, water dikinase] + diphosphate</text>
        <dbReference type="Rhea" id="RHEA:48580"/>
        <dbReference type="Rhea" id="RHEA-COMP:11425"/>
        <dbReference type="Rhea" id="RHEA-COMP:11426"/>
        <dbReference type="ChEBI" id="CHEBI:15378"/>
        <dbReference type="ChEBI" id="CHEBI:33019"/>
        <dbReference type="ChEBI" id="CHEBI:43176"/>
        <dbReference type="ChEBI" id="CHEBI:43474"/>
        <dbReference type="ChEBI" id="CHEBI:68546"/>
        <dbReference type="EC" id="2.7.4.28"/>
    </reaction>
</comment>
<comment type="similarity">
    <text evidence="1">Belongs to the pyruvate, phosphate/water dikinase regulatory protein family. PSRP subfamily.</text>
</comment>